<name>CALU_PONAB</name>
<comment type="function">
    <text evidence="1">Involved in regulation of vitamin K-dependent carboxylation of multiple N-terminal glutamate residues. Seems to inhibit gamma-carboxylase GGCX. Binds 7 calcium ions with a low affinity (By similarity).</text>
</comment>
<comment type="subunit">
    <text evidence="1">Interacts with GGCX.</text>
</comment>
<comment type="subcellular location">
    <subcellularLocation>
        <location evidence="3">Endoplasmic reticulum membrane</location>
    </subcellularLocation>
    <subcellularLocation>
        <location evidence="3">Golgi apparatus</location>
    </subcellularLocation>
    <subcellularLocation>
        <location evidence="3">Secreted</location>
    </subcellularLocation>
    <subcellularLocation>
        <location evidence="3">Melanosome</location>
    </subcellularLocation>
    <subcellularLocation>
        <location evidence="3">Sarcoplasmic reticulum lumen</location>
    </subcellularLocation>
</comment>
<comment type="similarity">
    <text evidence="6">Belongs to the CREC family.</text>
</comment>
<feature type="signal peptide" evidence="1">
    <location>
        <begin position="1"/>
        <end position="19"/>
    </location>
</feature>
<feature type="chain" id="PRO_0000364191" description="Calumenin">
    <location>
        <begin position="20"/>
        <end position="315"/>
    </location>
</feature>
<feature type="domain" description="EF-hand 1" evidence="5">
    <location>
        <begin position="68"/>
        <end position="103"/>
    </location>
</feature>
<feature type="domain" description="EF-hand 2" evidence="5">
    <location>
        <begin position="104"/>
        <end position="139"/>
    </location>
</feature>
<feature type="domain" description="EF-hand 3" evidence="5">
    <location>
        <begin position="151"/>
        <end position="186"/>
    </location>
</feature>
<feature type="domain" description="EF-hand 4" evidence="5">
    <location>
        <begin position="188"/>
        <end position="223"/>
    </location>
</feature>
<feature type="domain" description="EF-hand 5" evidence="5">
    <location>
        <begin position="229"/>
        <end position="264"/>
    </location>
</feature>
<feature type="domain" description="EF-hand 6" evidence="5">
    <location>
        <begin position="265"/>
        <end position="300"/>
    </location>
</feature>
<feature type="short sequence motif" description="Prevents secretion from ER" evidence="1">
    <location>
        <begin position="312"/>
        <end position="315"/>
    </location>
</feature>
<feature type="binding site" evidence="5">
    <location>
        <position position="81"/>
    </location>
    <ligand>
        <name>Ca(2+)</name>
        <dbReference type="ChEBI" id="CHEBI:29108"/>
        <label>1</label>
    </ligand>
</feature>
<feature type="binding site" evidence="5">
    <location>
        <position position="83"/>
    </location>
    <ligand>
        <name>Ca(2+)</name>
        <dbReference type="ChEBI" id="CHEBI:29108"/>
        <label>1</label>
    </ligand>
</feature>
<feature type="binding site" evidence="5">
    <location>
        <position position="85"/>
    </location>
    <ligand>
        <name>Ca(2+)</name>
        <dbReference type="ChEBI" id="CHEBI:29108"/>
        <label>1</label>
    </ligand>
</feature>
<feature type="binding site" evidence="5">
    <location>
        <position position="92"/>
    </location>
    <ligand>
        <name>Ca(2+)</name>
        <dbReference type="ChEBI" id="CHEBI:29108"/>
        <label>1</label>
    </ligand>
</feature>
<feature type="binding site" evidence="5">
    <location>
        <position position="117"/>
    </location>
    <ligand>
        <name>Ca(2+)</name>
        <dbReference type="ChEBI" id="CHEBI:29108"/>
        <label>2</label>
    </ligand>
</feature>
<feature type="binding site" evidence="5">
    <location>
        <position position="119"/>
    </location>
    <ligand>
        <name>Ca(2+)</name>
        <dbReference type="ChEBI" id="CHEBI:29108"/>
        <label>2</label>
    </ligand>
</feature>
<feature type="binding site" evidence="5">
    <location>
        <position position="121"/>
    </location>
    <ligand>
        <name>Ca(2+)</name>
        <dbReference type="ChEBI" id="CHEBI:29108"/>
        <label>2</label>
    </ligand>
</feature>
<feature type="binding site" evidence="5">
    <location>
        <position position="128"/>
    </location>
    <ligand>
        <name>Ca(2+)</name>
        <dbReference type="ChEBI" id="CHEBI:29108"/>
        <label>2</label>
    </ligand>
</feature>
<feature type="binding site" evidence="6">
    <location>
        <position position="164"/>
    </location>
    <ligand>
        <name>Ca(2+)</name>
        <dbReference type="ChEBI" id="CHEBI:29108"/>
        <label>3</label>
    </ligand>
</feature>
<feature type="binding site" evidence="6">
    <location>
        <position position="166"/>
    </location>
    <ligand>
        <name>Ca(2+)</name>
        <dbReference type="ChEBI" id="CHEBI:29108"/>
        <label>3</label>
    </ligand>
</feature>
<feature type="binding site" evidence="6">
    <location>
        <position position="168"/>
    </location>
    <ligand>
        <name>Ca(2+)</name>
        <dbReference type="ChEBI" id="CHEBI:29108"/>
        <label>3</label>
    </ligand>
</feature>
<feature type="binding site" evidence="6">
    <location>
        <position position="175"/>
    </location>
    <ligand>
        <name>Ca(2+)</name>
        <dbReference type="ChEBI" id="CHEBI:29108"/>
        <label>3</label>
    </ligand>
</feature>
<feature type="binding site" evidence="5">
    <location>
        <position position="201"/>
    </location>
    <ligand>
        <name>Ca(2+)</name>
        <dbReference type="ChEBI" id="CHEBI:29108"/>
        <label>4</label>
    </ligand>
</feature>
<feature type="binding site" evidence="5">
    <location>
        <position position="203"/>
    </location>
    <ligand>
        <name>Ca(2+)</name>
        <dbReference type="ChEBI" id="CHEBI:29108"/>
        <label>4</label>
    </ligand>
</feature>
<feature type="binding site" evidence="5">
    <location>
        <position position="205"/>
    </location>
    <ligand>
        <name>Ca(2+)</name>
        <dbReference type="ChEBI" id="CHEBI:29108"/>
        <label>4</label>
    </ligand>
</feature>
<feature type="binding site" evidence="5">
    <location>
        <position position="212"/>
    </location>
    <ligand>
        <name>Ca(2+)</name>
        <dbReference type="ChEBI" id="CHEBI:29108"/>
        <label>4</label>
    </ligand>
</feature>
<feature type="binding site" evidence="6">
    <location>
        <position position="242"/>
    </location>
    <ligand>
        <name>Ca(2+)</name>
        <dbReference type="ChEBI" id="CHEBI:29108"/>
        <label>5</label>
    </ligand>
</feature>
<feature type="binding site" evidence="6">
    <location>
        <position position="244"/>
    </location>
    <ligand>
        <name>Ca(2+)</name>
        <dbReference type="ChEBI" id="CHEBI:29108"/>
        <label>5</label>
    </ligand>
</feature>
<feature type="binding site" evidence="6">
    <location>
        <position position="246"/>
    </location>
    <ligand>
        <name>Ca(2+)</name>
        <dbReference type="ChEBI" id="CHEBI:29108"/>
        <label>5</label>
    </ligand>
</feature>
<feature type="binding site" evidence="6">
    <location>
        <position position="248"/>
    </location>
    <ligand>
        <name>Ca(2+)</name>
        <dbReference type="ChEBI" id="CHEBI:29108"/>
        <label>5</label>
    </ligand>
</feature>
<feature type="binding site" evidence="6">
    <location>
        <position position="253"/>
    </location>
    <ligand>
        <name>Ca(2+)</name>
        <dbReference type="ChEBI" id="CHEBI:29108"/>
        <label>5</label>
    </ligand>
</feature>
<feature type="binding site" evidence="5">
    <location>
        <position position="278"/>
    </location>
    <ligand>
        <name>Ca(2+)</name>
        <dbReference type="ChEBI" id="CHEBI:29108"/>
        <label>6</label>
    </ligand>
</feature>
<feature type="binding site" evidence="5">
    <location>
        <position position="280"/>
    </location>
    <ligand>
        <name>Ca(2+)</name>
        <dbReference type="ChEBI" id="CHEBI:29108"/>
        <label>6</label>
    </ligand>
</feature>
<feature type="binding site" evidence="5">
    <location>
        <position position="282"/>
    </location>
    <ligand>
        <name>Ca(2+)</name>
        <dbReference type="ChEBI" id="CHEBI:29108"/>
        <label>6</label>
    </ligand>
</feature>
<feature type="binding site" evidence="5">
    <location>
        <position position="284"/>
    </location>
    <ligand>
        <name>Ca(2+)</name>
        <dbReference type="ChEBI" id="CHEBI:29108"/>
        <label>6</label>
    </ligand>
</feature>
<feature type="binding site" evidence="5">
    <location>
        <position position="289"/>
    </location>
    <ligand>
        <name>Ca(2+)</name>
        <dbReference type="ChEBI" id="CHEBI:29108"/>
        <label>6</label>
    </ligand>
</feature>
<feature type="modified residue" description="Phosphoserine" evidence="3">
    <location>
        <position position="44"/>
    </location>
</feature>
<feature type="modified residue" description="Phosphotyrosine" evidence="3">
    <location>
        <position position="47"/>
    </location>
</feature>
<feature type="modified residue" description="Phosphothreonine" evidence="3">
    <location>
        <position position="65"/>
    </location>
</feature>
<feature type="modified residue" description="Phosphoserine" evidence="3">
    <location>
        <position position="69"/>
    </location>
</feature>
<feature type="modified residue" description="N6-acetyllysine" evidence="2">
    <location>
        <position position="165"/>
    </location>
</feature>
<feature type="modified residue" description="Phosphothreonine" evidence="3">
    <location>
        <position position="254"/>
    </location>
</feature>
<feature type="modified residue" description="Phosphoserine" evidence="3">
    <location>
        <position position="261"/>
    </location>
</feature>
<feature type="modified residue" description="Phosphoserine" evidence="3">
    <location>
        <position position="277"/>
    </location>
</feature>
<feature type="glycosylation site" description="N-linked (GlcNAc...) asparagine" evidence="4">
    <location>
        <position position="131"/>
    </location>
</feature>
<organism>
    <name type="scientific">Pongo abelii</name>
    <name type="common">Sumatran orangutan</name>
    <name type="synonym">Pongo pygmaeus abelii</name>
    <dbReference type="NCBI Taxonomy" id="9601"/>
    <lineage>
        <taxon>Eukaryota</taxon>
        <taxon>Metazoa</taxon>
        <taxon>Chordata</taxon>
        <taxon>Craniata</taxon>
        <taxon>Vertebrata</taxon>
        <taxon>Euteleostomi</taxon>
        <taxon>Mammalia</taxon>
        <taxon>Eutheria</taxon>
        <taxon>Euarchontoglires</taxon>
        <taxon>Primates</taxon>
        <taxon>Haplorrhini</taxon>
        <taxon>Catarrhini</taxon>
        <taxon>Hominidae</taxon>
        <taxon>Pongo</taxon>
    </lineage>
</organism>
<gene>
    <name type="primary">CALU</name>
</gene>
<reference key="1">
    <citation type="submission" date="2004-11" db="EMBL/GenBank/DDBJ databases">
        <authorList>
            <consortium name="The German cDNA consortium"/>
        </authorList>
    </citation>
    <scope>NUCLEOTIDE SEQUENCE [LARGE SCALE MRNA]</scope>
    <source>
        <tissue>Brain cortex</tissue>
    </source>
</reference>
<protein>
    <recommendedName>
        <fullName>Calumenin</fullName>
    </recommendedName>
</protein>
<sequence>MDLRQFLMCLSLCTAFALSKPTEKKDRVHHEPQLSDKVHNDAQSFDYDHDAFLGAEEAKTFDQLTPEESKERLGKIVSKIDDDKDGFVTVDELKDWIKFAQKRWIYEDVERQWKGHDLNEDGLVSWEEYKNATYGYVLDDPDPDDGFNYKQMMVRDERRFKMADKDGDLIATKEEFTAFLHPEEYDYMKDIVVQETMEDIDKNADGFIDLEEYIGDMYSHDGNTDEPEWVKTEREQFVEFRDKNRDGKMDKEETKDWILPSDYDHAEAEARHLVYESDQNKDGKLTKEEIVDKYDLFVGSQATDFGEALVRHDEF</sequence>
<accession>Q5RDD8</accession>
<keyword id="KW-0007">Acetylation</keyword>
<keyword id="KW-0106">Calcium</keyword>
<keyword id="KW-0256">Endoplasmic reticulum</keyword>
<keyword id="KW-0325">Glycoprotein</keyword>
<keyword id="KW-0333">Golgi apparatus</keyword>
<keyword id="KW-0472">Membrane</keyword>
<keyword id="KW-0479">Metal-binding</keyword>
<keyword id="KW-0597">Phosphoprotein</keyword>
<keyword id="KW-1185">Reference proteome</keyword>
<keyword id="KW-0677">Repeat</keyword>
<keyword id="KW-0703">Sarcoplasmic reticulum</keyword>
<keyword id="KW-0964">Secreted</keyword>
<keyword id="KW-0732">Signal</keyword>
<proteinExistence type="evidence at transcript level"/>
<evidence type="ECO:0000250" key="1"/>
<evidence type="ECO:0000250" key="2">
    <source>
        <dbReference type="UniProtKB" id="O35887"/>
    </source>
</evidence>
<evidence type="ECO:0000250" key="3">
    <source>
        <dbReference type="UniProtKB" id="O43852"/>
    </source>
</evidence>
<evidence type="ECO:0000255" key="4"/>
<evidence type="ECO:0000255" key="5">
    <source>
        <dbReference type="PROSITE-ProRule" id="PRU00448"/>
    </source>
</evidence>
<evidence type="ECO:0000305" key="6"/>
<dbReference type="EMBL" id="CR857975">
    <property type="protein sequence ID" value="CAH90219.1"/>
    <property type="molecule type" value="mRNA"/>
</dbReference>
<dbReference type="RefSeq" id="NP_001125087.1">
    <property type="nucleotide sequence ID" value="NM_001131615.2"/>
</dbReference>
<dbReference type="SMR" id="Q5RDD8"/>
<dbReference type="FunCoup" id="Q5RDD8">
    <property type="interactions" value="2703"/>
</dbReference>
<dbReference type="STRING" id="9601.ENSPPYP00000020025"/>
<dbReference type="GlyCosmos" id="Q5RDD8">
    <property type="glycosylation" value="1 site, No reported glycans"/>
</dbReference>
<dbReference type="GeneID" id="100171969"/>
<dbReference type="KEGG" id="pon:100171969"/>
<dbReference type="CTD" id="813"/>
<dbReference type="eggNOG" id="KOG4223">
    <property type="taxonomic scope" value="Eukaryota"/>
</dbReference>
<dbReference type="HOGENOM" id="CLU_044718_0_1_1"/>
<dbReference type="InParanoid" id="Q5RDD8"/>
<dbReference type="OrthoDB" id="293868at2759"/>
<dbReference type="Proteomes" id="UP000001595">
    <property type="component" value="Chromosome 7"/>
</dbReference>
<dbReference type="GO" id="GO:0005789">
    <property type="term" value="C:endoplasmic reticulum membrane"/>
    <property type="evidence" value="ECO:0000250"/>
    <property type="project" value="UniProtKB"/>
</dbReference>
<dbReference type="GO" id="GO:0005576">
    <property type="term" value="C:extracellular region"/>
    <property type="evidence" value="ECO:0000250"/>
    <property type="project" value="UniProtKB"/>
</dbReference>
<dbReference type="GO" id="GO:0005794">
    <property type="term" value="C:Golgi apparatus"/>
    <property type="evidence" value="ECO:0000250"/>
    <property type="project" value="UniProtKB"/>
</dbReference>
<dbReference type="GO" id="GO:0042470">
    <property type="term" value="C:melanosome"/>
    <property type="evidence" value="ECO:0007669"/>
    <property type="project" value="UniProtKB-SubCell"/>
</dbReference>
<dbReference type="GO" id="GO:0033018">
    <property type="term" value="C:sarcoplasmic reticulum lumen"/>
    <property type="evidence" value="ECO:0007669"/>
    <property type="project" value="UniProtKB-SubCell"/>
</dbReference>
<dbReference type="GO" id="GO:0005509">
    <property type="term" value="F:calcium ion binding"/>
    <property type="evidence" value="ECO:0007669"/>
    <property type="project" value="InterPro"/>
</dbReference>
<dbReference type="CDD" id="cd16228">
    <property type="entry name" value="EFh_CREC_Calumenin"/>
    <property type="match status" value="1"/>
</dbReference>
<dbReference type="FunFam" id="1.10.238.10:FF:000090">
    <property type="entry name" value="calumenin isoform X2"/>
    <property type="match status" value="1"/>
</dbReference>
<dbReference type="FunFam" id="1.10.238.10:FF:000109">
    <property type="entry name" value="calumenin isoform X2"/>
    <property type="match status" value="1"/>
</dbReference>
<dbReference type="FunFam" id="1.10.238.10:FF:000110">
    <property type="entry name" value="calumenin isoform X2"/>
    <property type="match status" value="1"/>
</dbReference>
<dbReference type="Gene3D" id="1.10.238.10">
    <property type="entry name" value="EF-hand"/>
    <property type="match status" value="2"/>
</dbReference>
<dbReference type="InterPro" id="IPR011992">
    <property type="entry name" value="EF-hand-dom_pair"/>
</dbReference>
<dbReference type="InterPro" id="IPR018247">
    <property type="entry name" value="EF_Hand_1_Ca_BS"/>
</dbReference>
<dbReference type="InterPro" id="IPR002048">
    <property type="entry name" value="EF_hand_dom"/>
</dbReference>
<dbReference type="PANTHER" id="PTHR10827:SF76">
    <property type="entry name" value="CALUMENIN"/>
    <property type="match status" value="1"/>
</dbReference>
<dbReference type="PANTHER" id="PTHR10827">
    <property type="entry name" value="RETICULOCALBIN"/>
    <property type="match status" value="1"/>
</dbReference>
<dbReference type="Pfam" id="PF13202">
    <property type="entry name" value="EF-hand_5"/>
    <property type="match status" value="2"/>
</dbReference>
<dbReference type="Pfam" id="PF13833">
    <property type="entry name" value="EF-hand_8"/>
    <property type="match status" value="1"/>
</dbReference>
<dbReference type="SMART" id="SM00054">
    <property type="entry name" value="EFh"/>
    <property type="match status" value="4"/>
</dbReference>
<dbReference type="SUPFAM" id="SSF47473">
    <property type="entry name" value="EF-hand"/>
    <property type="match status" value="2"/>
</dbReference>
<dbReference type="PROSITE" id="PS00018">
    <property type="entry name" value="EF_HAND_1"/>
    <property type="match status" value="4"/>
</dbReference>
<dbReference type="PROSITE" id="PS50222">
    <property type="entry name" value="EF_HAND_2"/>
    <property type="match status" value="6"/>
</dbReference>